<keyword id="KW-0012">Acyltransferase</keyword>
<keyword id="KW-0256">Endoplasmic reticulum</keyword>
<keyword id="KW-0472">Membrane</keyword>
<keyword id="KW-1185">Reference proteome</keyword>
<keyword id="KW-0808">Transferase</keyword>
<proteinExistence type="evidence at transcript level"/>
<name>GNA2_ORYSJ</name>
<protein>
    <recommendedName>
        <fullName>Probable glucosamine 6-phosphate N-acetyltransferase 2</fullName>
        <ecNumber evidence="3">2.3.1.4</ecNumber>
    </recommendedName>
    <alternativeName>
        <fullName>Glucose-6-phosphate acetyltransferase 2</fullName>
    </alternativeName>
    <alternativeName>
        <fullName>Phosphoglucosamine acetylase 2</fullName>
    </alternativeName>
    <alternativeName>
        <fullName>Phosphoglucosamine transacetylase 2</fullName>
    </alternativeName>
</protein>
<feature type="chain" id="PRO_0000421039" description="Probable glucosamine 6-phosphate N-acetyltransferase 2">
    <location>
        <begin position="1"/>
        <end position="166"/>
    </location>
</feature>
<feature type="domain" description="N-acetyltransferase" evidence="4">
    <location>
        <begin position="21"/>
        <end position="166"/>
    </location>
</feature>
<feature type="binding site" evidence="1">
    <location>
        <position position="43"/>
    </location>
    <ligand>
        <name>substrate</name>
    </ligand>
</feature>
<feature type="binding site" evidence="2">
    <location>
        <begin position="93"/>
        <end position="96"/>
    </location>
    <ligand>
        <name>substrate</name>
    </ligand>
</feature>
<feature type="binding site" evidence="2">
    <location>
        <begin position="105"/>
        <end position="107"/>
    </location>
    <ligand>
        <name>substrate</name>
    </ligand>
</feature>
<feature type="binding site" evidence="2">
    <location>
        <begin position="115"/>
        <end position="120"/>
    </location>
    <ligand>
        <name>acetyl-CoA</name>
        <dbReference type="ChEBI" id="CHEBI:57288"/>
    </ligand>
</feature>
<feature type="binding site" evidence="2">
    <location>
        <begin position="136"/>
        <end position="137"/>
    </location>
    <ligand>
        <name>substrate</name>
    </ligand>
</feature>
<feature type="binding site" evidence="2">
    <location>
        <begin position="150"/>
        <end position="152"/>
    </location>
    <ligand>
        <name>acetyl-CoA</name>
        <dbReference type="ChEBI" id="CHEBI:57288"/>
    </ligand>
</feature>
<evidence type="ECO:0000250" key="1"/>
<evidence type="ECO:0000250" key="2">
    <source>
        <dbReference type="UniProtKB" id="Q96EK6"/>
    </source>
</evidence>
<evidence type="ECO:0000250" key="3">
    <source>
        <dbReference type="UniProtKB" id="Q9LFU9"/>
    </source>
</evidence>
<evidence type="ECO:0000255" key="4">
    <source>
        <dbReference type="PROSITE-ProRule" id="PRU00532"/>
    </source>
</evidence>
<evidence type="ECO:0000305" key="5"/>
<dbReference type="EC" id="2.3.1.4" evidence="3"/>
<dbReference type="EMBL" id="AP004098">
    <property type="status" value="NOT_ANNOTATED_CDS"/>
    <property type="molecule type" value="Genomic_DNA"/>
</dbReference>
<dbReference type="EMBL" id="AP008208">
    <property type="protein sequence ID" value="BAH91866.1"/>
    <property type="status" value="ALT_INIT"/>
    <property type="molecule type" value="Genomic_DNA"/>
</dbReference>
<dbReference type="EMBL" id="AP014958">
    <property type="status" value="NOT_ANNOTATED_CDS"/>
    <property type="molecule type" value="Genomic_DNA"/>
</dbReference>
<dbReference type="EMBL" id="CM000139">
    <property type="protein sequence ID" value="EAZ24401.1"/>
    <property type="molecule type" value="Genomic_DNA"/>
</dbReference>
<dbReference type="EMBL" id="AK063075">
    <property type="status" value="NOT_ANNOTATED_CDS"/>
    <property type="molecule type" value="mRNA"/>
</dbReference>
<dbReference type="RefSeq" id="XP_015626803.1">
    <property type="nucleotide sequence ID" value="XM_015771317.1"/>
</dbReference>
<dbReference type="SMR" id="C7IZ16"/>
<dbReference type="FunCoup" id="C7IZ16">
    <property type="interactions" value="2046"/>
</dbReference>
<dbReference type="STRING" id="39947.C7IZ16"/>
<dbReference type="PaxDb" id="39947-C7IZ16"/>
<dbReference type="KEGG" id="dosa:Os02g0717700"/>
<dbReference type="eggNOG" id="KOG3396">
    <property type="taxonomic scope" value="Eukaryota"/>
</dbReference>
<dbReference type="HOGENOM" id="CLU_072095_3_0_1"/>
<dbReference type="InParanoid" id="C7IZ16"/>
<dbReference type="OrthoDB" id="10039976at2759"/>
<dbReference type="PlantReactome" id="R-OSA-1119386">
    <property type="pathway name" value="UDP-N-acetylgalactosamine biosynthesis"/>
</dbReference>
<dbReference type="UniPathway" id="UPA00113">
    <property type="reaction ID" value="UER00529"/>
</dbReference>
<dbReference type="Proteomes" id="UP000000763">
    <property type="component" value="Chromosome 2"/>
</dbReference>
<dbReference type="Proteomes" id="UP000007752">
    <property type="component" value="Chromosome 2"/>
</dbReference>
<dbReference type="Proteomes" id="UP000059680">
    <property type="component" value="Chromosome 2"/>
</dbReference>
<dbReference type="GO" id="GO:0005789">
    <property type="term" value="C:endoplasmic reticulum membrane"/>
    <property type="evidence" value="ECO:0007669"/>
    <property type="project" value="UniProtKB-SubCell"/>
</dbReference>
<dbReference type="GO" id="GO:0004343">
    <property type="term" value="F:glucosamine 6-phosphate N-acetyltransferase activity"/>
    <property type="evidence" value="ECO:0000318"/>
    <property type="project" value="GO_Central"/>
</dbReference>
<dbReference type="GO" id="GO:0006048">
    <property type="term" value="P:UDP-N-acetylglucosamine biosynthetic process"/>
    <property type="evidence" value="ECO:0007669"/>
    <property type="project" value="UniProtKB-UniPathway"/>
</dbReference>
<dbReference type="CDD" id="cd04301">
    <property type="entry name" value="NAT_SF"/>
    <property type="match status" value="1"/>
</dbReference>
<dbReference type="FunFam" id="3.40.630.30:FF:000048">
    <property type="entry name" value="Glucosamine 6-phosphate N-acetyltransferase"/>
    <property type="match status" value="1"/>
</dbReference>
<dbReference type="Gene3D" id="3.40.630.30">
    <property type="match status" value="1"/>
</dbReference>
<dbReference type="InterPro" id="IPR016181">
    <property type="entry name" value="Acyl_CoA_acyltransferase"/>
</dbReference>
<dbReference type="InterPro" id="IPR000182">
    <property type="entry name" value="GNAT_dom"/>
</dbReference>
<dbReference type="InterPro" id="IPR039143">
    <property type="entry name" value="GNPNAT1-like"/>
</dbReference>
<dbReference type="PANTHER" id="PTHR13355">
    <property type="entry name" value="GLUCOSAMINE 6-PHOSPHATE N-ACETYLTRANSFERASE"/>
    <property type="match status" value="1"/>
</dbReference>
<dbReference type="PANTHER" id="PTHR13355:SF11">
    <property type="entry name" value="GLUCOSAMINE 6-PHOSPHATE N-ACETYLTRANSFERASE"/>
    <property type="match status" value="1"/>
</dbReference>
<dbReference type="Pfam" id="PF00583">
    <property type="entry name" value="Acetyltransf_1"/>
    <property type="match status" value="1"/>
</dbReference>
<dbReference type="SUPFAM" id="SSF55729">
    <property type="entry name" value="Acyl-CoA N-acyltransferases (Nat)"/>
    <property type="match status" value="1"/>
</dbReference>
<dbReference type="PROSITE" id="PS51186">
    <property type="entry name" value="GNAT"/>
    <property type="match status" value="1"/>
</dbReference>
<sequence length="166" mass="17619">MASTSPEPSTAAAVAETGCSVQIRRLEATDHEKGFVALLSQLSACPDLTASEFAACFADLAALGDDHVILVAEDPAAPESRILATGCLFVERKFLRGGGKVGHVEDVVVDAAARGRGLGLRVVRRLVEIAKEAGCYKVILDCTPELRAYYAKCGFVEKGVQMAIYF</sequence>
<gene>
    <name type="ordered locus">Os02g0717700</name>
    <name type="ordered locus">LOC_Os02g48650</name>
    <name type="ORF">OsJ_08156</name>
</gene>
<comment type="function">
    <text evidence="3">Acetyltransferase involved in UDP-N-acetylglucosamine (UDP-GlcNAc) biosynthesis. UDP-GlcNAc is an essential metabolite that serves as an initial sugar donor of N-glycan synthesis and thus plays an important role in protein and lipid glycosylation (By similarity).</text>
</comment>
<comment type="catalytic activity">
    <reaction evidence="3">
        <text>D-glucosamine 6-phosphate + acetyl-CoA = N-acetyl-D-glucosamine 6-phosphate + CoA + H(+)</text>
        <dbReference type="Rhea" id="RHEA:10292"/>
        <dbReference type="ChEBI" id="CHEBI:15378"/>
        <dbReference type="ChEBI" id="CHEBI:57287"/>
        <dbReference type="ChEBI" id="CHEBI:57288"/>
        <dbReference type="ChEBI" id="CHEBI:57513"/>
        <dbReference type="ChEBI" id="CHEBI:58725"/>
        <dbReference type="EC" id="2.3.1.4"/>
    </reaction>
</comment>
<comment type="pathway">
    <text>Nucleotide-sugar biosynthesis; UDP-N-acetyl-alpha-D-glucosamine biosynthesis; N-acetyl-alpha-D-glucosamine 1-phosphate from alpha-D-glucosamine 6-phosphate (route I): step 1/2.</text>
</comment>
<comment type="subunit">
    <text evidence="1">Homodimer.</text>
</comment>
<comment type="subcellular location">
    <subcellularLocation>
        <location evidence="1">Endoplasmic reticulum membrane</location>
        <topology evidence="1">Peripheral membrane protein</topology>
    </subcellularLocation>
</comment>
<comment type="similarity">
    <text evidence="5">Belongs to the acetyltransferase family. GNA1 subfamily.</text>
</comment>
<comment type="sequence caution" evidence="5">
    <conflict type="erroneous initiation">
        <sequence resource="EMBL-CDS" id="BAH91866"/>
    </conflict>
    <text>Truncated N-terminus.</text>
</comment>
<organism>
    <name type="scientific">Oryza sativa subsp. japonica</name>
    <name type="common">Rice</name>
    <dbReference type="NCBI Taxonomy" id="39947"/>
    <lineage>
        <taxon>Eukaryota</taxon>
        <taxon>Viridiplantae</taxon>
        <taxon>Streptophyta</taxon>
        <taxon>Embryophyta</taxon>
        <taxon>Tracheophyta</taxon>
        <taxon>Spermatophyta</taxon>
        <taxon>Magnoliopsida</taxon>
        <taxon>Liliopsida</taxon>
        <taxon>Poales</taxon>
        <taxon>Poaceae</taxon>
        <taxon>BOP clade</taxon>
        <taxon>Oryzoideae</taxon>
        <taxon>Oryzeae</taxon>
        <taxon>Oryzinae</taxon>
        <taxon>Oryza</taxon>
        <taxon>Oryza sativa</taxon>
    </lineage>
</organism>
<accession>C7IZ16</accession>
<accession>A3AAR2</accession>
<reference key="1">
    <citation type="journal article" date="2005" name="Nature">
        <title>The map-based sequence of the rice genome.</title>
        <authorList>
            <consortium name="International rice genome sequencing project (IRGSP)"/>
        </authorList>
    </citation>
    <scope>NUCLEOTIDE SEQUENCE [LARGE SCALE GENOMIC DNA]</scope>
    <source>
        <strain>cv. Nipponbare</strain>
    </source>
</reference>
<reference key="2">
    <citation type="journal article" date="2008" name="Nucleic Acids Res.">
        <title>The rice annotation project database (RAP-DB): 2008 update.</title>
        <authorList>
            <consortium name="The rice annotation project (RAP)"/>
        </authorList>
    </citation>
    <scope>GENOME REANNOTATION</scope>
    <source>
        <strain>cv. Nipponbare</strain>
    </source>
</reference>
<reference key="3">
    <citation type="journal article" date="2013" name="Rice">
        <title>Improvement of the Oryza sativa Nipponbare reference genome using next generation sequence and optical map data.</title>
        <authorList>
            <person name="Kawahara Y."/>
            <person name="de la Bastide M."/>
            <person name="Hamilton J.P."/>
            <person name="Kanamori H."/>
            <person name="McCombie W.R."/>
            <person name="Ouyang S."/>
            <person name="Schwartz D.C."/>
            <person name="Tanaka T."/>
            <person name="Wu J."/>
            <person name="Zhou S."/>
            <person name="Childs K.L."/>
            <person name="Davidson R.M."/>
            <person name="Lin H."/>
            <person name="Quesada-Ocampo L."/>
            <person name="Vaillancourt B."/>
            <person name="Sakai H."/>
            <person name="Lee S.S."/>
            <person name="Kim J."/>
            <person name="Numa H."/>
            <person name="Itoh T."/>
            <person name="Buell C.R."/>
            <person name="Matsumoto T."/>
        </authorList>
    </citation>
    <scope>GENOME REANNOTATION</scope>
    <source>
        <strain>cv. Nipponbare</strain>
    </source>
</reference>
<reference key="4">
    <citation type="journal article" date="2005" name="PLoS Biol.">
        <title>The genomes of Oryza sativa: a history of duplications.</title>
        <authorList>
            <person name="Yu J."/>
            <person name="Wang J."/>
            <person name="Lin W."/>
            <person name="Li S."/>
            <person name="Li H."/>
            <person name="Zhou J."/>
            <person name="Ni P."/>
            <person name="Dong W."/>
            <person name="Hu S."/>
            <person name="Zeng C."/>
            <person name="Zhang J."/>
            <person name="Zhang Y."/>
            <person name="Li R."/>
            <person name="Xu Z."/>
            <person name="Li S."/>
            <person name="Li X."/>
            <person name="Zheng H."/>
            <person name="Cong L."/>
            <person name="Lin L."/>
            <person name="Yin J."/>
            <person name="Geng J."/>
            <person name="Li G."/>
            <person name="Shi J."/>
            <person name="Liu J."/>
            <person name="Lv H."/>
            <person name="Li J."/>
            <person name="Wang J."/>
            <person name="Deng Y."/>
            <person name="Ran L."/>
            <person name="Shi X."/>
            <person name="Wang X."/>
            <person name="Wu Q."/>
            <person name="Li C."/>
            <person name="Ren X."/>
            <person name="Wang J."/>
            <person name="Wang X."/>
            <person name="Li D."/>
            <person name="Liu D."/>
            <person name="Zhang X."/>
            <person name="Ji Z."/>
            <person name="Zhao W."/>
            <person name="Sun Y."/>
            <person name="Zhang Z."/>
            <person name="Bao J."/>
            <person name="Han Y."/>
            <person name="Dong L."/>
            <person name="Ji J."/>
            <person name="Chen P."/>
            <person name="Wu S."/>
            <person name="Liu J."/>
            <person name="Xiao Y."/>
            <person name="Bu D."/>
            <person name="Tan J."/>
            <person name="Yang L."/>
            <person name="Ye C."/>
            <person name="Zhang J."/>
            <person name="Xu J."/>
            <person name="Zhou Y."/>
            <person name="Yu Y."/>
            <person name="Zhang B."/>
            <person name="Zhuang S."/>
            <person name="Wei H."/>
            <person name="Liu B."/>
            <person name="Lei M."/>
            <person name="Yu H."/>
            <person name="Li Y."/>
            <person name="Xu H."/>
            <person name="Wei S."/>
            <person name="He X."/>
            <person name="Fang L."/>
            <person name="Zhang Z."/>
            <person name="Zhang Y."/>
            <person name="Huang X."/>
            <person name="Su Z."/>
            <person name="Tong W."/>
            <person name="Li J."/>
            <person name="Tong Z."/>
            <person name="Li S."/>
            <person name="Ye J."/>
            <person name="Wang L."/>
            <person name="Fang L."/>
            <person name="Lei T."/>
            <person name="Chen C.-S."/>
            <person name="Chen H.-C."/>
            <person name="Xu Z."/>
            <person name="Li H."/>
            <person name="Huang H."/>
            <person name="Zhang F."/>
            <person name="Xu H."/>
            <person name="Li N."/>
            <person name="Zhao C."/>
            <person name="Li S."/>
            <person name="Dong L."/>
            <person name="Huang Y."/>
            <person name="Li L."/>
            <person name="Xi Y."/>
            <person name="Qi Q."/>
            <person name="Li W."/>
            <person name="Zhang B."/>
            <person name="Hu W."/>
            <person name="Zhang Y."/>
            <person name="Tian X."/>
            <person name="Jiao Y."/>
            <person name="Liang X."/>
            <person name="Jin J."/>
            <person name="Gao L."/>
            <person name="Zheng W."/>
            <person name="Hao B."/>
            <person name="Liu S.-M."/>
            <person name="Wang W."/>
            <person name="Yuan L."/>
            <person name="Cao M."/>
            <person name="McDermott J."/>
            <person name="Samudrala R."/>
            <person name="Wang J."/>
            <person name="Wong G.K.-S."/>
            <person name="Yang H."/>
        </authorList>
    </citation>
    <scope>NUCLEOTIDE SEQUENCE [LARGE SCALE GENOMIC DNA]</scope>
    <source>
        <strain>cv. Nipponbare</strain>
    </source>
</reference>
<reference key="5">
    <citation type="journal article" date="2003" name="Science">
        <title>Collection, mapping, and annotation of over 28,000 cDNA clones from japonica rice.</title>
        <authorList>
            <consortium name="The rice full-length cDNA consortium"/>
        </authorList>
    </citation>
    <scope>NUCLEOTIDE SEQUENCE [LARGE SCALE MRNA] OF 10-166</scope>
    <source>
        <strain>cv. Nipponbare</strain>
    </source>
</reference>